<dbReference type="EC" id="3.1.26.4" evidence="1"/>
<dbReference type="EMBL" id="CP001091">
    <property type="protein sequence ID" value="ACE60783.1"/>
    <property type="molecule type" value="Genomic_DNA"/>
</dbReference>
<dbReference type="RefSeq" id="WP_005620061.1">
    <property type="nucleotide sequence ID" value="NC_010939.1"/>
</dbReference>
<dbReference type="SMR" id="B3GZX1"/>
<dbReference type="KEGG" id="apa:APP7_0131"/>
<dbReference type="HOGENOM" id="CLU_036532_3_2_6"/>
<dbReference type="Proteomes" id="UP000001226">
    <property type="component" value="Chromosome"/>
</dbReference>
<dbReference type="GO" id="GO:0005737">
    <property type="term" value="C:cytoplasm"/>
    <property type="evidence" value="ECO:0007669"/>
    <property type="project" value="UniProtKB-SubCell"/>
</dbReference>
<dbReference type="GO" id="GO:0032299">
    <property type="term" value="C:ribonuclease H2 complex"/>
    <property type="evidence" value="ECO:0007669"/>
    <property type="project" value="TreeGrafter"/>
</dbReference>
<dbReference type="GO" id="GO:0030145">
    <property type="term" value="F:manganese ion binding"/>
    <property type="evidence" value="ECO:0007669"/>
    <property type="project" value="UniProtKB-UniRule"/>
</dbReference>
<dbReference type="GO" id="GO:0003723">
    <property type="term" value="F:RNA binding"/>
    <property type="evidence" value="ECO:0007669"/>
    <property type="project" value="InterPro"/>
</dbReference>
<dbReference type="GO" id="GO:0004523">
    <property type="term" value="F:RNA-DNA hybrid ribonuclease activity"/>
    <property type="evidence" value="ECO:0007669"/>
    <property type="project" value="UniProtKB-UniRule"/>
</dbReference>
<dbReference type="GO" id="GO:0043137">
    <property type="term" value="P:DNA replication, removal of RNA primer"/>
    <property type="evidence" value="ECO:0007669"/>
    <property type="project" value="TreeGrafter"/>
</dbReference>
<dbReference type="GO" id="GO:0006298">
    <property type="term" value="P:mismatch repair"/>
    <property type="evidence" value="ECO:0007669"/>
    <property type="project" value="TreeGrafter"/>
</dbReference>
<dbReference type="CDD" id="cd07182">
    <property type="entry name" value="RNase_HII_bacteria_HII_like"/>
    <property type="match status" value="1"/>
</dbReference>
<dbReference type="FunFam" id="3.30.420.10:FF:000006">
    <property type="entry name" value="Ribonuclease HII"/>
    <property type="match status" value="1"/>
</dbReference>
<dbReference type="Gene3D" id="3.30.420.10">
    <property type="entry name" value="Ribonuclease H-like superfamily/Ribonuclease H"/>
    <property type="match status" value="1"/>
</dbReference>
<dbReference type="HAMAP" id="MF_00052_B">
    <property type="entry name" value="RNase_HII_B"/>
    <property type="match status" value="1"/>
</dbReference>
<dbReference type="InterPro" id="IPR022898">
    <property type="entry name" value="RNase_HII"/>
</dbReference>
<dbReference type="InterPro" id="IPR001352">
    <property type="entry name" value="RNase_HII/HIII"/>
</dbReference>
<dbReference type="InterPro" id="IPR024567">
    <property type="entry name" value="RNase_HII/HIII_dom"/>
</dbReference>
<dbReference type="InterPro" id="IPR012337">
    <property type="entry name" value="RNaseH-like_sf"/>
</dbReference>
<dbReference type="InterPro" id="IPR036397">
    <property type="entry name" value="RNaseH_sf"/>
</dbReference>
<dbReference type="NCBIfam" id="NF000594">
    <property type="entry name" value="PRK00015.1-1"/>
    <property type="match status" value="1"/>
</dbReference>
<dbReference type="NCBIfam" id="NF000595">
    <property type="entry name" value="PRK00015.1-3"/>
    <property type="match status" value="1"/>
</dbReference>
<dbReference type="NCBIfam" id="NF000596">
    <property type="entry name" value="PRK00015.1-4"/>
    <property type="match status" value="1"/>
</dbReference>
<dbReference type="PANTHER" id="PTHR10954">
    <property type="entry name" value="RIBONUCLEASE H2 SUBUNIT A"/>
    <property type="match status" value="1"/>
</dbReference>
<dbReference type="PANTHER" id="PTHR10954:SF18">
    <property type="entry name" value="RIBONUCLEASE HII"/>
    <property type="match status" value="1"/>
</dbReference>
<dbReference type="Pfam" id="PF01351">
    <property type="entry name" value="RNase_HII"/>
    <property type="match status" value="1"/>
</dbReference>
<dbReference type="SUPFAM" id="SSF53098">
    <property type="entry name" value="Ribonuclease H-like"/>
    <property type="match status" value="1"/>
</dbReference>
<dbReference type="PROSITE" id="PS51975">
    <property type="entry name" value="RNASE_H_2"/>
    <property type="match status" value="1"/>
</dbReference>
<organism>
    <name type="scientific">Actinobacillus pleuropneumoniae serotype 7 (strain AP76)</name>
    <dbReference type="NCBI Taxonomy" id="537457"/>
    <lineage>
        <taxon>Bacteria</taxon>
        <taxon>Pseudomonadati</taxon>
        <taxon>Pseudomonadota</taxon>
        <taxon>Gammaproteobacteria</taxon>
        <taxon>Pasteurellales</taxon>
        <taxon>Pasteurellaceae</taxon>
        <taxon>Actinobacillus</taxon>
    </lineage>
</organism>
<proteinExistence type="inferred from homology"/>
<reference key="1">
    <citation type="submission" date="2008-06" db="EMBL/GenBank/DDBJ databases">
        <title>Genome and proteome analysis of A. pleuropneumoniae serotype 7.</title>
        <authorList>
            <person name="Linke B."/>
            <person name="Buettner F."/>
            <person name="Martinez-Arias R."/>
            <person name="Goesmann A."/>
            <person name="Baltes N."/>
            <person name="Tegetmeyer H."/>
            <person name="Singh M."/>
            <person name="Gerlach G.F."/>
        </authorList>
    </citation>
    <scope>NUCLEOTIDE SEQUENCE [LARGE SCALE GENOMIC DNA]</scope>
    <source>
        <strain>AP76</strain>
    </source>
</reference>
<feature type="chain" id="PRO_1000091602" description="Ribonuclease HII">
    <location>
        <begin position="1"/>
        <end position="197"/>
    </location>
</feature>
<feature type="domain" description="RNase H type-2" evidence="2">
    <location>
        <begin position="11"/>
        <end position="197"/>
    </location>
</feature>
<feature type="binding site" evidence="1">
    <location>
        <position position="17"/>
    </location>
    <ligand>
        <name>a divalent metal cation</name>
        <dbReference type="ChEBI" id="CHEBI:60240"/>
    </ligand>
</feature>
<feature type="binding site" evidence="1">
    <location>
        <position position="18"/>
    </location>
    <ligand>
        <name>a divalent metal cation</name>
        <dbReference type="ChEBI" id="CHEBI:60240"/>
    </ligand>
</feature>
<feature type="binding site" evidence="1">
    <location>
        <position position="109"/>
    </location>
    <ligand>
        <name>a divalent metal cation</name>
        <dbReference type="ChEBI" id="CHEBI:60240"/>
    </ligand>
</feature>
<protein>
    <recommendedName>
        <fullName evidence="1">Ribonuclease HII</fullName>
        <shortName evidence="1">RNase HII</shortName>
        <ecNumber evidence="1">3.1.26.4</ecNumber>
    </recommendedName>
</protein>
<accession>B3GZX1</accession>
<sequence length="197" mass="21461">MSTNFIYPNAHLIAGVDEVGRGPLVGAVVTAAVILDPNNPIEGLADSKKLSEKKRLLLAEEIKAKALCWSLGRAEPEEIDRLNILHATMLAMQRAVAGLNIQPDFVLVDGNRIPTLPMPAQAVIKGDSLVAEISAASILAKVARDQEMAELDVQYPEYGFAKHKGYPTKLHFEKLEQFGATPFHRKSFAPVKKILGL</sequence>
<comment type="function">
    <text evidence="1">Endonuclease that specifically degrades the RNA of RNA-DNA hybrids.</text>
</comment>
<comment type="catalytic activity">
    <reaction evidence="1">
        <text>Endonucleolytic cleavage to 5'-phosphomonoester.</text>
        <dbReference type="EC" id="3.1.26.4"/>
    </reaction>
</comment>
<comment type="cofactor">
    <cofactor evidence="1">
        <name>Mn(2+)</name>
        <dbReference type="ChEBI" id="CHEBI:29035"/>
    </cofactor>
    <cofactor evidence="1">
        <name>Mg(2+)</name>
        <dbReference type="ChEBI" id="CHEBI:18420"/>
    </cofactor>
    <text evidence="1">Manganese or magnesium. Binds 1 divalent metal ion per monomer in the absence of substrate. May bind a second metal ion after substrate binding.</text>
</comment>
<comment type="subcellular location">
    <subcellularLocation>
        <location evidence="1">Cytoplasm</location>
    </subcellularLocation>
</comment>
<comment type="similarity">
    <text evidence="1">Belongs to the RNase HII family.</text>
</comment>
<name>RNH2_ACTP7</name>
<gene>
    <name evidence="1" type="primary">rnhB</name>
    <name type="ordered locus">APP7_0131</name>
</gene>
<evidence type="ECO:0000255" key="1">
    <source>
        <dbReference type="HAMAP-Rule" id="MF_00052"/>
    </source>
</evidence>
<evidence type="ECO:0000255" key="2">
    <source>
        <dbReference type="PROSITE-ProRule" id="PRU01319"/>
    </source>
</evidence>
<keyword id="KW-0963">Cytoplasm</keyword>
<keyword id="KW-0255">Endonuclease</keyword>
<keyword id="KW-0378">Hydrolase</keyword>
<keyword id="KW-0464">Manganese</keyword>
<keyword id="KW-0479">Metal-binding</keyword>
<keyword id="KW-0540">Nuclease</keyword>